<proteinExistence type="inferred from homology"/>
<organism>
    <name type="scientific">Mannheimia succiniciproducens (strain KCTC 0769BP / MBEL55E)</name>
    <dbReference type="NCBI Taxonomy" id="221988"/>
    <lineage>
        <taxon>Bacteria</taxon>
        <taxon>Pseudomonadati</taxon>
        <taxon>Pseudomonadota</taxon>
        <taxon>Gammaproteobacteria</taxon>
        <taxon>Pasteurellales</taxon>
        <taxon>Pasteurellaceae</taxon>
        <taxon>Basfia</taxon>
    </lineage>
</organism>
<feature type="chain" id="PRO_1000044395" description="Sec-independent protein translocase protein TatA">
    <location>
        <begin position="1"/>
        <end position="75"/>
    </location>
</feature>
<feature type="transmembrane region" description="Helical" evidence="1">
    <location>
        <begin position="1"/>
        <end position="21"/>
    </location>
</feature>
<feature type="region of interest" description="Disordered" evidence="2">
    <location>
        <begin position="50"/>
        <end position="75"/>
    </location>
</feature>
<dbReference type="EMBL" id="AE016827">
    <property type="protein sequence ID" value="AAU37107.1"/>
    <property type="molecule type" value="Genomic_DNA"/>
</dbReference>
<dbReference type="RefSeq" id="WP_011199679.1">
    <property type="nucleotide sequence ID" value="NC_006300.1"/>
</dbReference>
<dbReference type="SMR" id="Q65VA3"/>
<dbReference type="STRING" id="221988.MS0500"/>
<dbReference type="KEGG" id="msu:MS0500"/>
<dbReference type="eggNOG" id="COG1826">
    <property type="taxonomic scope" value="Bacteria"/>
</dbReference>
<dbReference type="HOGENOM" id="CLU_086034_5_1_6"/>
<dbReference type="OrthoDB" id="7066617at2"/>
<dbReference type="Proteomes" id="UP000000607">
    <property type="component" value="Chromosome"/>
</dbReference>
<dbReference type="GO" id="GO:0033281">
    <property type="term" value="C:TAT protein transport complex"/>
    <property type="evidence" value="ECO:0007669"/>
    <property type="project" value="UniProtKB-UniRule"/>
</dbReference>
<dbReference type="GO" id="GO:0008320">
    <property type="term" value="F:protein transmembrane transporter activity"/>
    <property type="evidence" value="ECO:0007669"/>
    <property type="project" value="UniProtKB-UniRule"/>
</dbReference>
<dbReference type="GO" id="GO:0043953">
    <property type="term" value="P:protein transport by the Tat complex"/>
    <property type="evidence" value="ECO:0007669"/>
    <property type="project" value="UniProtKB-UniRule"/>
</dbReference>
<dbReference type="FunFam" id="1.20.5.3310:FF:000001">
    <property type="entry name" value="Probable Sec-independent protein translocase protein TatE"/>
    <property type="match status" value="1"/>
</dbReference>
<dbReference type="Gene3D" id="1.20.5.3310">
    <property type="match status" value="1"/>
</dbReference>
<dbReference type="HAMAP" id="MF_00236">
    <property type="entry name" value="TatA_E"/>
    <property type="match status" value="1"/>
</dbReference>
<dbReference type="InterPro" id="IPR003369">
    <property type="entry name" value="TatA/B/E"/>
</dbReference>
<dbReference type="InterPro" id="IPR006312">
    <property type="entry name" value="TatA/E"/>
</dbReference>
<dbReference type="NCBIfam" id="NF002500">
    <property type="entry name" value="PRK01833.1"/>
    <property type="match status" value="1"/>
</dbReference>
<dbReference type="NCBIfam" id="TIGR01411">
    <property type="entry name" value="tatAE"/>
    <property type="match status" value="1"/>
</dbReference>
<dbReference type="PANTHER" id="PTHR42982">
    <property type="entry name" value="SEC-INDEPENDENT PROTEIN TRANSLOCASE PROTEIN TATA"/>
    <property type="match status" value="1"/>
</dbReference>
<dbReference type="PANTHER" id="PTHR42982:SF1">
    <property type="entry name" value="SEC-INDEPENDENT PROTEIN TRANSLOCASE PROTEIN TATA"/>
    <property type="match status" value="1"/>
</dbReference>
<dbReference type="Pfam" id="PF02416">
    <property type="entry name" value="TatA_B_E"/>
    <property type="match status" value="1"/>
</dbReference>
<gene>
    <name evidence="1" type="primary">tatA</name>
    <name type="ordered locus">MS0500</name>
</gene>
<name>TATA_MANSM</name>
<comment type="function">
    <text evidence="1">Part of the twin-arginine translocation (Tat) system that transports large folded proteins containing a characteristic twin-arginine motif in their signal peptide across membranes. TatA could form the protein-conducting channel of the Tat system.</text>
</comment>
<comment type="subunit">
    <text evidence="1">The Tat system comprises two distinct complexes: a TatABC complex, containing multiple copies of TatA, TatB and TatC subunits, and a separate TatA complex, containing only TatA subunits. Substrates initially bind to the TatABC complex, which probably triggers association of the separate TatA complex to form the active translocon.</text>
</comment>
<comment type="subcellular location">
    <subcellularLocation>
        <location evidence="1">Cell inner membrane</location>
        <topology evidence="1">Single-pass membrane protein</topology>
    </subcellularLocation>
</comment>
<comment type="similarity">
    <text evidence="1">Belongs to the TatA/E family.</text>
</comment>
<accession>Q65VA3</accession>
<reference key="1">
    <citation type="journal article" date="2004" name="Nat. Biotechnol.">
        <title>The genome sequence of the capnophilic rumen bacterium Mannheimia succiniciproducens.</title>
        <authorList>
            <person name="Hong S.H."/>
            <person name="Kim J.S."/>
            <person name="Lee S.Y."/>
            <person name="In Y.H."/>
            <person name="Choi S.S."/>
            <person name="Rih J.-K."/>
            <person name="Kim C.H."/>
            <person name="Jeong H."/>
            <person name="Hur C.G."/>
            <person name="Kim J.J."/>
        </authorList>
    </citation>
    <scope>NUCLEOTIDE SEQUENCE [LARGE SCALE GENOMIC DNA]</scope>
    <source>
        <strain>KCTC 0769BP / MBEL55E</strain>
    </source>
</reference>
<keyword id="KW-0997">Cell inner membrane</keyword>
<keyword id="KW-1003">Cell membrane</keyword>
<keyword id="KW-0472">Membrane</keyword>
<keyword id="KW-0653">Protein transport</keyword>
<keyword id="KW-0811">Translocation</keyword>
<keyword id="KW-0812">Transmembrane</keyword>
<keyword id="KW-1133">Transmembrane helix</keyword>
<keyword id="KW-0813">Transport</keyword>
<protein>
    <recommendedName>
        <fullName evidence="1">Sec-independent protein translocase protein TatA</fullName>
    </recommendedName>
</protein>
<sequence>MGGISIWQLLIIVAIIVLLFGTKKLRTLGTDLGESVKGFKKAMNEDEPKDAEFKSLNKDESATAGSEKVKDKEQA</sequence>
<evidence type="ECO:0000255" key="1">
    <source>
        <dbReference type="HAMAP-Rule" id="MF_00236"/>
    </source>
</evidence>
<evidence type="ECO:0000256" key="2">
    <source>
        <dbReference type="SAM" id="MobiDB-lite"/>
    </source>
</evidence>